<geneLocation type="chloroplast"/>
<gene>
    <name evidence="1" type="primary">matK</name>
    <name type="ordered locus">Poptr_cp002</name>
</gene>
<accession>A4GYP0</accession>
<keyword id="KW-0150">Chloroplast</keyword>
<keyword id="KW-0507">mRNA processing</keyword>
<keyword id="KW-0934">Plastid</keyword>
<keyword id="KW-1185">Reference proteome</keyword>
<keyword id="KW-0694">RNA-binding</keyword>
<keyword id="KW-0819">tRNA processing</keyword>
<proteinExistence type="inferred from homology"/>
<comment type="function">
    <text evidence="1">Usually encoded in the trnK tRNA gene intron. Probably assists in splicing its own and other chloroplast group II introns.</text>
</comment>
<comment type="subcellular location">
    <subcellularLocation>
        <location>Plastid</location>
        <location>Chloroplast</location>
    </subcellularLocation>
</comment>
<comment type="similarity">
    <text evidence="1">Belongs to the intron maturase 2 family. MatK subfamily.</text>
</comment>
<evidence type="ECO:0000255" key="1">
    <source>
        <dbReference type="HAMAP-Rule" id="MF_01390"/>
    </source>
</evidence>
<protein>
    <recommendedName>
        <fullName evidence="1">Maturase K</fullName>
    </recommendedName>
    <alternativeName>
        <fullName evidence="1">Intron maturase</fullName>
    </alternativeName>
</protein>
<reference key="1">
    <citation type="journal article" date="2006" name="Science">
        <title>The genome of black cottonwood, Populus trichocarpa (Torr. &amp; Gray).</title>
        <authorList>
            <person name="Tuskan G.A."/>
            <person name="Difazio S."/>
            <person name="Jansson S."/>
            <person name="Bohlmann J."/>
            <person name="Grigoriev I."/>
            <person name="Hellsten U."/>
            <person name="Putnam N."/>
            <person name="Ralph S."/>
            <person name="Rombauts S."/>
            <person name="Salamov A."/>
            <person name="Schein J."/>
            <person name="Sterck L."/>
            <person name="Aerts A."/>
            <person name="Bhalerao R.R."/>
            <person name="Bhalerao R.P."/>
            <person name="Blaudez D."/>
            <person name="Boerjan W."/>
            <person name="Brun A."/>
            <person name="Brunner A."/>
            <person name="Busov V."/>
            <person name="Campbell M."/>
            <person name="Carlson J."/>
            <person name="Chalot M."/>
            <person name="Chapman J."/>
            <person name="Chen G.-L."/>
            <person name="Cooper D."/>
            <person name="Coutinho P.M."/>
            <person name="Couturier J."/>
            <person name="Covert S."/>
            <person name="Cronk Q."/>
            <person name="Cunningham R."/>
            <person name="Davis J."/>
            <person name="Degroeve S."/>
            <person name="Dejardin A."/>
            <person name="dePamphilis C.W."/>
            <person name="Detter J."/>
            <person name="Dirks B."/>
            <person name="Dubchak I."/>
            <person name="Duplessis S."/>
            <person name="Ehlting J."/>
            <person name="Ellis B."/>
            <person name="Gendler K."/>
            <person name="Goodstein D."/>
            <person name="Gribskov M."/>
            <person name="Grimwood J."/>
            <person name="Groover A."/>
            <person name="Gunter L."/>
            <person name="Hamberger B."/>
            <person name="Heinze B."/>
            <person name="Helariutta Y."/>
            <person name="Henrissat B."/>
            <person name="Holligan D."/>
            <person name="Holt R."/>
            <person name="Huang W."/>
            <person name="Islam-Faridi N."/>
            <person name="Jones S."/>
            <person name="Jones-Rhoades M."/>
            <person name="Jorgensen R."/>
            <person name="Joshi C."/>
            <person name="Kangasjaervi J."/>
            <person name="Karlsson J."/>
            <person name="Kelleher C."/>
            <person name="Kirkpatrick R."/>
            <person name="Kirst M."/>
            <person name="Kohler A."/>
            <person name="Kalluri U."/>
            <person name="Larimer F."/>
            <person name="Leebens-Mack J."/>
            <person name="Leple J.-C."/>
            <person name="Locascio P."/>
            <person name="Lou Y."/>
            <person name="Lucas S."/>
            <person name="Martin F."/>
            <person name="Montanini B."/>
            <person name="Napoli C."/>
            <person name="Nelson D.R."/>
            <person name="Nelson C."/>
            <person name="Nieminen K."/>
            <person name="Nilsson O."/>
            <person name="Pereda V."/>
            <person name="Peter G."/>
            <person name="Philippe R."/>
            <person name="Pilate G."/>
            <person name="Poliakov A."/>
            <person name="Razumovskaya J."/>
            <person name="Richardson P."/>
            <person name="Rinaldi C."/>
            <person name="Ritland K."/>
            <person name="Rouze P."/>
            <person name="Ryaboy D."/>
            <person name="Schmutz J."/>
            <person name="Schrader J."/>
            <person name="Segerman B."/>
            <person name="Shin H."/>
            <person name="Siddiqui A."/>
            <person name="Sterky F."/>
            <person name="Terry A."/>
            <person name="Tsai C.-J."/>
            <person name="Uberbacher E."/>
            <person name="Unneberg P."/>
            <person name="Vahala J."/>
            <person name="Wall K."/>
            <person name="Wessler S."/>
            <person name="Yang G."/>
            <person name="Yin T."/>
            <person name="Douglas C."/>
            <person name="Marra M."/>
            <person name="Sandberg G."/>
            <person name="Van de Peer Y."/>
            <person name="Rokhsar D.S."/>
        </authorList>
    </citation>
    <scope>NUCLEOTIDE SEQUENCE [LARGE SCALE GENOMIC DNA]</scope>
    <source>
        <strain>cv. Nisqually</strain>
    </source>
</reference>
<sequence>MKIEKSQRNLEIDRSRKNDFLYPLIFREYIYTFAHDRDLNRSILLENVGYDNKYSLLIVKRLITRMYQQNHLIISANDSNQNTFFRYNKNLYFQMISEGFAVIVEIPFSLRLVSSLESSEIVKSHNLRSIHSIFPFLEGKFPHLNYLSEGLIPYPIHLEKLVQILRYWVKDPSSLHLLRLFLHEYWNLNSLIIPKKSISFFVKKNQRFFLFLYNSHVYEYESVFFFLCKQSFHFRLTFYQVFLERIYFYGKIEHFVEVFTKDWGDSLCLLKDPFIHYIRYQGKSIFVSKDTPLLMKKWKYYLVNLCQCHFDVCFQPQKIHINPFSLYKHSFALLGYLSSSSVRLNLSVVRSQMLENAFLMDNIMNKLDTTVSIIPLIGSLAKMKFCNAVGHPISKPTWADFSDSDIIDRFVRICRNLSHYYSGSSRKKSLYRIKYILRLSCVKTLARKHKSTVRIFLKRLGSELLEEFFTEEEQILFLIFPRASSISQKLYRGRVWYLDIICINELSNHE</sequence>
<organism>
    <name type="scientific">Populus trichocarpa</name>
    <name type="common">Western balsam poplar</name>
    <name type="synonym">Populus balsamifera subsp. trichocarpa</name>
    <dbReference type="NCBI Taxonomy" id="3694"/>
    <lineage>
        <taxon>Eukaryota</taxon>
        <taxon>Viridiplantae</taxon>
        <taxon>Streptophyta</taxon>
        <taxon>Embryophyta</taxon>
        <taxon>Tracheophyta</taxon>
        <taxon>Spermatophyta</taxon>
        <taxon>Magnoliopsida</taxon>
        <taxon>eudicotyledons</taxon>
        <taxon>Gunneridae</taxon>
        <taxon>Pentapetalae</taxon>
        <taxon>rosids</taxon>
        <taxon>fabids</taxon>
        <taxon>Malpighiales</taxon>
        <taxon>Salicaceae</taxon>
        <taxon>Saliceae</taxon>
        <taxon>Populus</taxon>
    </lineage>
</organism>
<name>MATK_POPTR</name>
<feature type="chain" id="PRO_0000355960" description="Maturase K">
    <location>
        <begin position="1"/>
        <end position="510"/>
    </location>
</feature>
<dbReference type="EMBL" id="EF489041">
    <property type="protein sequence ID" value="ABO36684.1"/>
    <property type="molecule type" value="Genomic_DNA"/>
</dbReference>
<dbReference type="RefSeq" id="YP_001109481.1">
    <property type="nucleotide sequence ID" value="NC_009143.1"/>
</dbReference>
<dbReference type="STRING" id="3694.A4GYP0"/>
<dbReference type="EnsemblPlants" id="Potri.013G138201.1.v4.1">
    <property type="protein sequence ID" value="Potri.013G138201.1.v4.1"/>
    <property type="gene ID" value="Potri.013G138201.v4.1"/>
</dbReference>
<dbReference type="GeneID" id="4929631"/>
<dbReference type="Gramene" id="Potri.013G138201.1.v4.1">
    <property type="protein sequence ID" value="Potri.013G138201.1.v4.1"/>
    <property type="gene ID" value="Potri.013G138201.v4.1"/>
</dbReference>
<dbReference type="KEGG" id="pop:4929631"/>
<dbReference type="InParanoid" id="A4GYP0"/>
<dbReference type="OMA" id="RVWYLDI"/>
<dbReference type="OrthoDB" id="1886907at2759"/>
<dbReference type="Proteomes" id="UP000006729">
    <property type="component" value="Chloroplast"/>
</dbReference>
<dbReference type="GO" id="GO:0009507">
    <property type="term" value="C:chloroplast"/>
    <property type="evidence" value="ECO:0007669"/>
    <property type="project" value="UniProtKB-SubCell"/>
</dbReference>
<dbReference type="GO" id="GO:0003723">
    <property type="term" value="F:RNA binding"/>
    <property type="evidence" value="ECO:0007669"/>
    <property type="project" value="UniProtKB-KW"/>
</dbReference>
<dbReference type="GO" id="GO:0006397">
    <property type="term" value="P:mRNA processing"/>
    <property type="evidence" value="ECO:0007669"/>
    <property type="project" value="UniProtKB-KW"/>
</dbReference>
<dbReference type="GO" id="GO:0008380">
    <property type="term" value="P:RNA splicing"/>
    <property type="evidence" value="ECO:0007669"/>
    <property type="project" value="UniProtKB-UniRule"/>
</dbReference>
<dbReference type="GO" id="GO:0008033">
    <property type="term" value="P:tRNA processing"/>
    <property type="evidence" value="ECO:0007669"/>
    <property type="project" value="UniProtKB-KW"/>
</dbReference>
<dbReference type="HAMAP" id="MF_01390">
    <property type="entry name" value="MatK"/>
    <property type="match status" value="1"/>
</dbReference>
<dbReference type="InterPro" id="IPR024937">
    <property type="entry name" value="Domain_X"/>
</dbReference>
<dbReference type="InterPro" id="IPR002866">
    <property type="entry name" value="Maturase_MatK"/>
</dbReference>
<dbReference type="InterPro" id="IPR024942">
    <property type="entry name" value="Maturase_MatK_N"/>
</dbReference>
<dbReference type="PANTHER" id="PTHR34811">
    <property type="entry name" value="MATURASE K"/>
    <property type="match status" value="1"/>
</dbReference>
<dbReference type="PANTHER" id="PTHR34811:SF1">
    <property type="entry name" value="MATURASE K"/>
    <property type="match status" value="1"/>
</dbReference>
<dbReference type="Pfam" id="PF01348">
    <property type="entry name" value="Intron_maturas2"/>
    <property type="match status" value="1"/>
</dbReference>
<dbReference type="Pfam" id="PF01824">
    <property type="entry name" value="MatK_N"/>
    <property type="match status" value="1"/>
</dbReference>